<evidence type="ECO:0000250" key="1"/>
<evidence type="ECO:0000250" key="2">
    <source>
        <dbReference type="UniProtKB" id="Q15084"/>
    </source>
</evidence>
<evidence type="ECO:0000255" key="3">
    <source>
        <dbReference type="PROSITE-ProRule" id="PRU00691"/>
    </source>
</evidence>
<evidence type="ECO:0000255" key="4">
    <source>
        <dbReference type="PROSITE-ProRule" id="PRU10138"/>
    </source>
</evidence>
<evidence type="ECO:0000256" key="5">
    <source>
        <dbReference type="SAM" id="MobiDB-lite"/>
    </source>
</evidence>
<evidence type="ECO:0000269" key="6">
    <source>
    </source>
</evidence>
<evidence type="ECO:0000305" key="7"/>
<keyword id="KW-1003">Cell membrane</keyword>
<keyword id="KW-0143">Chaperone</keyword>
<keyword id="KW-0903">Direct protein sequencing</keyword>
<keyword id="KW-1015">Disulfide bond</keyword>
<keyword id="KW-0256">Endoplasmic reticulum</keyword>
<keyword id="KW-0413">Isomerase</keyword>
<keyword id="KW-0472">Membrane</keyword>
<keyword id="KW-0597">Phosphoprotein</keyword>
<keyword id="KW-0676">Redox-active center</keyword>
<keyword id="KW-1185">Reference proteome</keyword>
<keyword id="KW-0677">Repeat</keyword>
<keyword id="KW-0732">Signal</keyword>
<protein>
    <recommendedName>
        <fullName>Protein disulfide-isomerase A6</fullName>
        <ecNumber evidence="2">5.3.4.1</ecNumber>
    </recommendedName>
    <alternativeName>
        <fullName>Protein disulfide isomerase P5</fullName>
    </alternativeName>
</protein>
<comment type="function">
    <text evidence="2">May function as a chaperone that inhibits aggregation of misfolded proteins. Negatively regulates the unfolded protein response (UPR) through binding to UPR sensors such as ERN1, which in turn inactivates ERN1 signaling. May also regulate the UPR via the EIF2AK3 UPR sensor. Plays a role in platelet aggregation and activation by agonists such as convulxin, collagen and thrombin.</text>
</comment>
<comment type="catalytic activity">
    <reaction evidence="2">
        <text>Catalyzes the rearrangement of -S-S- bonds in proteins.</text>
        <dbReference type="EC" id="5.3.4.1"/>
    </reaction>
</comment>
<comment type="subunit">
    <text evidence="2">Part of a large chaperone multiprotein complex comprising DNAJB11, HSP90B1, HSPA5, HYOU, PDIA2, PDIA4, PDIA6, PPIB, SDF2L1, UGGT1 and very small amounts of ERP29, but not, or at very low levels, CALR nor CANX. Interacts with MICA on the surface of tumor cells, leading to MICA disulfide bond reduction which is required for its release from tumor cells. Interacts with ITGB3 following platelet stimulation. Interacts with ERN1; the interaction is direct. Interacts with EIF2AK3.</text>
</comment>
<comment type="subcellular location">
    <subcellularLocation>
        <location evidence="2">Endoplasmic reticulum lumen</location>
    </subcellularLocation>
    <subcellularLocation>
        <location evidence="2">Cell membrane</location>
    </subcellularLocation>
    <subcellularLocation>
        <location evidence="2">Melanosome</location>
    </subcellularLocation>
</comment>
<comment type="tissue specificity">
    <text>Expressed most abundantly in lung and kidney, followed by heart, liver and brain.</text>
</comment>
<comment type="similarity">
    <text evidence="7">Belongs to the protein disulfide isomerase family.</text>
</comment>
<gene>
    <name type="primary">PDIA6</name>
</gene>
<proteinExistence type="evidence at protein level"/>
<sequence>MARLGFGLVSCTFFLAASGLYSSSDDVIELTPSNFNREVIQSNSLWLVEFYAPWCGHCQRLTPEWKKAATALKDVVKVGAVDADKHQSLGGQYGVQGFPTIKIFGANKNKPEDYQGGRTGEAIVDAALSALRQLVKDRLSGRSGGYSSGKQGRGDSSSKKDVIELTDDTFDKNVLDSDDVWMVEFYAPWCGHCKNLEPEWATAATEVKEQTKGKVKLAAVDATVNQVLANRYGIRGFPTIKIFQKGEAPVDYDGGRTRSDIVSRALDLFSDNAPPPELLEIINEDVAKKMCEEHQLCVVAVLPHILDTGAARNSYLEILLKLADKYKKKMWGWLWTEAGAQSELENALGIGGFGYPAMARINARKMKFALLKGSFSEQGINEFLRELSFGRASTAPVGGGSFPAITAREPWDGRDGELPVEDDIDLSDVELDDLEKDEL</sequence>
<reference key="1">
    <citation type="journal article" date="1992" name="Biochem. J.">
        <title>The gene for a novel protein, a member of the protein disulphide isomerase/form I phosphoinositide-specific phospholipase C family, is amplified in hydroxyurea-resistant cells.</title>
        <authorList>
            <person name="Chaudhuri M.M."/>
            <person name="Tonin P.N."/>
            <person name="Lewis W.H."/>
            <person name="Srinivasan P.R."/>
        </authorList>
    </citation>
    <scope>NUCLEOTIDE SEQUENCE [MRNA]</scope>
    <scope>PROTEIN SEQUENCE OF 20-43</scope>
</reference>
<reference key="2">
    <citation type="journal article" date="2010" name="Asian J. Androl.">
        <title>Glucose-regulated protein precursor (GRP78) and tumor rejection antigen (GP96) are unique to hamster caput epididymal spermatozoa.</title>
        <authorList>
            <person name="Kameshwari D.B."/>
            <person name="Bhande S."/>
            <person name="Sundaram C.S."/>
            <person name="Kota V."/>
            <person name="Siva A.B."/>
            <person name="Shivaji S."/>
        </authorList>
    </citation>
    <scope>IDENTIFICATION BY MASS SPECTROMETRY</scope>
</reference>
<organism>
    <name type="scientific">Mesocricetus auratus</name>
    <name type="common">Golden hamster</name>
    <dbReference type="NCBI Taxonomy" id="10036"/>
    <lineage>
        <taxon>Eukaryota</taxon>
        <taxon>Metazoa</taxon>
        <taxon>Chordata</taxon>
        <taxon>Craniata</taxon>
        <taxon>Vertebrata</taxon>
        <taxon>Euteleostomi</taxon>
        <taxon>Mammalia</taxon>
        <taxon>Eutheria</taxon>
        <taxon>Euarchontoglires</taxon>
        <taxon>Glires</taxon>
        <taxon>Rodentia</taxon>
        <taxon>Myomorpha</taxon>
        <taxon>Muroidea</taxon>
        <taxon>Cricetidae</taxon>
        <taxon>Cricetinae</taxon>
        <taxon>Mesocricetus</taxon>
    </lineage>
</organism>
<accession>P38660</accession>
<dbReference type="EC" id="5.3.4.1" evidence="2"/>
<dbReference type="EMBL" id="X62678">
    <property type="protein sequence ID" value="CAA44550.1"/>
    <property type="molecule type" value="mRNA"/>
</dbReference>
<dbReference type="PIR" id="S19656">
    <property type="entry name" value="S19656"/>
</dbReference>
<dbReference type="SMR" id="P38660"/>
<dbReference type="STRING" id="10036.ENSMAUP00000012660"/>
<dbReference type="eggNOG" id="KOG0191">
    <property type="taxonomic scope" value="Eukaryota"/>
</dbReference>
<dbReference type="Proteomes" id="UP000189706">
    <property type="component" value="Unplaced"/>
</dbReference>
<dbReference type="GO" id="GO:0005788">
    <property type="term" value="C:endoplasmic reticulum lumen"/>
    <property type="evidence" value="ECO:0007669"/>
    <property type="project" value="UniProtKB-SubCell"/>
</dbReference>
<dbReference type="GO" id="GO:0042470">
    <property type="term" value="C:melanosome"/>
    <property type="evidence" value="ECO:0000250"/>
    <property type="project" value="UniProtKB"/>
</dbReference>
<dbReference type="GO" id="GO:0005886">
    <property type="term" value="C:plasma membrane"/>
    <property type="evidence" value="ECO:0000250"/>
    <property type="project" value="UniProtKB"/>
</dbReference>
<dbReference type="GO" id="GO:0003756">
    <property type="term" value="F:protein disulfide isomerase activity"/>
    <property type="evidence" value="ECO:0000250"/>
    <property type="project" value="UniProtKB"/>
</dbReference>
<dbReference type="GO" id="GO:0015035">
    <property type="term" value="F:protein-disulfide reductase activity"/>
    <property type="evidence" value="ECO:0007669"/>
    <property type="project" value="TreeGrafter"/>
</dbReference>
<dbReference type="GO" id="GO:0030168">
    <property type="term" value="P:platelet activation"/>
    <property type="evidence" value="ECO:0000250"/>
    <property type="project" value="UniProtKB"/>
</dbReference>
<dbReference type="GO" id="GO:0070527">
    <property type="term" value="P:platelet aggregation"/>
    <property type="evidence" value="ECO:0000250"/>
    <property type="project" value="UniProtKB"/>
</dbReference>
<dbReference type="GO" id="GO:0034976">
    <property type="term" value="P:response to endoplasmic reticulum stress"/>
    <property type="evidence" value="ECO:0007669"/>
    <property type="project" value="TreeGrafter"/>
</dbReference>
<dbReference type="CDD" id="cd02983">
    <property type="entry name" value="P5_C"/>
    <property type="match status" value="1"/>
</dbReference>
<dbReference type="CDD" id="cd03001">
    <property type="entry name" value="PDI_a_P5"/>
    <property type="match status" value="2"/>
</dbReference>
<dbReference type="FunFam" id="3.40.30.10:FF:000032">
    <property type="entry name" value="Protein disulfide-isomerase A6 homolog"/>
    <property type="match status" value="1"/>
</dbReference>
<dbReference type="FunFam" id="3.40.30.10:FF:000050">
    <property type="entry name" value="protein disulfide-isomerase A6 isoform X1"/>
    <property type="match status" value="1"/>
</dbReference>
<dbReference type="Gene3D" id="3.40.30.10">
    <property type="entry name" value="Glutaredoxin"/>
    <property type="match status" value="2"/>
</dbReference>
<dbReference type="InterPro" id="IPR005788">
    <property type="entry name" value="PDI_thioredoxin-like_dom"/>
</dbReference>
<dbReference type="InterPro" id="IPR036249">
    <property type="entry name" value="Thioredoxin-like_sf"/>
</dbReference>
<dbReference type="InterPro" id="IPR017937">
    <property type="entry name" value="Thioredoxin_CS"/>
</dbReference>
<dbReference type="InterPro" id="IPR013766">
    <property type="entry name" value="Thioredoxin_domain"/>
</dbReference>
<dbReference type="NCBIfam" id="TIGR01126">
    <property type="entry name" value="pdi_dom"/>
    <property type="match status" value="2"/>
</dbReference>
<dbReference type="PANTHER" id="PTHR45815">
    <property type="entry name" value="PROTEIN DISULFIDE-ISOMERASE A6"/>
    <property type="match status" value="1"/>
</dbReference>
<dbReference type="PANTHER" id="PTHR45815:SF3">
    <property type="entry name" value="PROTEIN DISULFIDE-ISOMERASE A6"/>
    <property type="match status" value="1"/>
</dbReference>
<dbReference type="Pfam" id="PF00085">
    <property type="entry name" value="Thioredoxin"/>
    <property type="match status" value="2"/>
</dbReference>
<dbReference type="PRINTS" id="PR00421">
    <property type="entry name" value="THIOREDOXIN"/>
</dbReference>
<dbReference type="SUPFAM" id="SSF52833">
    <property type="entry name" value="Thioredoxin-like"/>
    <property type="match status" value="3"/>
</dbReference>
<dbReference type="PROSITE" id="PS00014">
    <property type="entry name" value="ER_TARGET"/>
    <property type="match status" value="1"/>
</dbReference>
<dbReference type="PROSITE" id="PS00194">
    <property type="entry name" value="THIOREDOXIN_1"/>
    <property type="match status" value="2"/>
</dbReference>
<dbReference type="PROSITE" id="PS51352">
    <property type="entry name" value="THIOREDOXIN_2"/>
    <property type="match status" value="2"/>
</dbReference>
<feature type="signal peptide" evidence="6">
    <location>
        <begin position="1"/>
        <end position="19"/>
    </location>
</feature>
<feature type="chain" id="PRO_0000034237" description="Protein disulfide-isomerase A6">
    <location>
        <begin position="20"/>
        <end position="439"/>
    </location>
</feature>
<feature type="domain" description="Thioredoxin 1" evidence="3">
    <location>
        <begin position="20"/>
        <end position="133"/>
    </location>
</feature>
<feature type="domain" description="Thioredoxin 2" evidence="3">
    <location>
        <begin position="151"/>
        <end position="287"/>
    </location>
</feature>
<feature type="region of interest" description="Disordered" evidence="5">
    <location>
        <begin position="141"/>
        <end position="160"/>
    </location>
</feature>
<feature type="region of interest" description="Disordered" evidence="5">
    <location>
        <begin position="400"/>
        <end position="425"/>
    </location>
</feature>
<feature type="short sequence motif" description="Prevents secretion from ER" evidence="4">
    <location>
        <begin position="436"/>
        <end position="439"/>
    </location>
</feature>
<feature type="active site" description="Nucleophile" evidence="1">
    <location>
        <position position="55"/>
    </location>
</feature>
<feature type="active site" description="Nucleophile" evidence="1">
    <location>
        <position position="58"/>
    </location>
</feature>
<feature type="active site" description="Nucleophile" evidence="1">
    <location>
        <position position="190"/>
    </location>
</feature>
<feature type="active site" description="Nucleophile" evidence="1">
    <location>
        <position position="193"/>
    </location>
</feature>
<feature type="site" description="Contributes to redox potential value" evidence="1">
    <location>
        <position position="56"/>
    </location>
</feature>
<feature type="site" description="Contributes to redox potential value" evidence="1">
    <location>
        <position position="57"/>
    </location>
</feature>
<feature type="site" description="Lowers pKa of C-terminal Cys of first active site" evidence="1">
    <location>
        <position position="118"/>
    </location>
</feature>
<feature type="site" description="Contributes to redox potential value" evidence="1">
    <location>
        <position position="191"/>
    </location>
</feature>
<feature type="site" description="Contributes to redox potential value" evidence="1">
    <location>
        <position position="192"/>
    </location>
</feature>
<feature type="site" description="Lowers pKa of C-terminal Cys of second active site" evidence="1">
    <location>
        <position position="256"/>
    </location>
</feature>
<feature type="modified residue" description="Phosphoserine" evidence="2">
    <location>
        <position position="129"/>
    </location>
</feature>
<feature type="modified residue" description="Phosphoserine" evidence="2">
    <location>
        <position position="156"/>
    </location>
</feature>
<feature type="modified residue" description="Phosphoserine" evidence="2">
    <location>
        <position position="158"/>
    </location>
</feature>
<feature type="modified residue" description="Phosphoserine" evidence="2">
    <location>
        <position position="427"/>
    </location>
</feature>
<feature type="disulfide bond" description="Redox-active" evidence="3">
    <location>
        <begin position="55"/>
        <end position="58"/>
    </location>
</feature>
<feature type="disulfide bond" description="Redox-active" evidence="3">
    <location>
        <begin position="190"/>
        <end position="193"/>
    </location>
</feature>
<name>PDIA6_MESAU</name>